<sequence length="405" mass="43652">MESILALLLALALVPYQLSRGQSFQVNPPESEVAVAMGTSLQITCSMSCDEGVARVHWRGLDTSLGSVQTLPGSSILSVRGMLSDTGTPVCVGSCGSRSFQHSVKILVYAFPDQLVVSPEFLVPGQDQVVSCTAHNIWPADPNSLSFALLLGEQRLEGAQALEPEQEEEIQEAEGTPLFRMTQRWRLPSLGTPAPPALHCQVTMQLPKLVLTHRKEIPVLQSQTSPKPPNTTSAEPYILTSSSTAEAVSTGLNITTLPSAPPYPKLSPRTLSSEGPCRPKIHQDLEAGWELLCEASCGPGVTVRWTLAPGDLATYHKREAGAQAWLSVLPPGPMVEGWFQCRQDPGGEVTNLYVPGQVTPNSSSTVVLWIGSLVLGLLALVFLAYRLWKCYRPGPRPDTSSCTHL</sequence>
<keyword id="KW-0025">Alternative splicing</keyword>
<keyword id="KW-0130">Cell adhesion</keyword>
<keyword id="KW-1015">Disulfide bond</keyword>
<keyword id="KW-0325">Glycoprotein</keyword>
<keyword id="KW-0393">Immunoglobulin domain</keyword>
<keyword id="KW-0472">Membrane</keyword>
<keyword id="KW-1185">Reference proteome</keyword>
<keyword id="KW-0677">Repeat</keyword>
<keyword id="KW-0732">Signal</keyword>
<keyword id="KW-0812">Transmembrane</keyword>
<keyword id="KW-1133">Transmembrane helix</keyword>
<evidence type="ECO:0000250" key="1">
    <source>
        <dbReference type="UniProtKB" id="Q13477"/>
    </source>
</evidence>
<evidence type="ECO:0000255" key="2"/>
<evidence type="ECO:0000256" key="3">
    <source>
        <dbReference type="SAM" id="MobiDB-lite"/>
    </source>
</evidence>
<evidence type="ECO:0000269" key="4">
    <source>
    </source>
</evidence>
<evidence type="ECO:0000269" key="5">
    <source>
    </source>
</evidence>
<evidence type="ECO:0000269" key="6">
    <source>
    </source>
</evidence>
<evidence type="ECO:0000269" key="7">
    <source>
    </source>
</evidence>
<evidence type="ECO:0000269" key="8">
    <source>
    </source>
</evidence>
<evidence type="ECO:0000269" key="9">
    <source>
    </source>
</evidence>
<evidence type="ECO:0000269" key="10">
    <source>
    </source>
</evidence>
<evidence type="ECO:0000303" key="11">
    <source>
    </source>
</evidence>
<evidence type="ECO:0000303" key="12">
    <source>
    </source>
</evidence>
<evidence type="ECO:0000305" key="13"/>
<reference key="1">
    <citation type="journal article" date="1993" name="Nature">
        <title>MAdCAM-1 has homology to immunoglobulin and mucin-like adhesion receptors and to IgA1.</title>
        <authorList>
            <person name="Briskin M.J."/>
            <person name="McEvoy L.M."/>
            <person name="Butcher E.C."/>
        </authorList>
    </citation>
    <scope>NUCLEOTIDE SEQUENCE (ISOFORM 1)</scope>
    <scope>INTERACTION WITH ALPHA-4/BETA-7 INTEGRIN</scope>
    <scope>TISSUE SPECIFICITY</scope>
    <source>
        <strain>BALB/cJ</strain>
        <tissue>Brain</tissue>
    </source>
</reference>
<reference key="2">
    <citation type="journal article" date="1995" name="J. Immunol.">
        <title>Organization, regulatory sequences, and alternatively spliced transcripts of the mucosal addressin cell adhesion molecule-1 (MAdCAM-1) gene.</title>
        <authorList>
            <person name="Sampaio S.O."/>
            <person name="Li X."/>
            <person name="Takeuchi M."/>
            <person name="Mei C."/>
            <person name="Francke U."/>
            <person name="Butcher E.C."/>
            <person name="Briskin M.J."/>
        </authorList>
    </citation>
    <scope>NUCLEOTIDE SEQUENCE [GENOMIC DNA] (ISOFORMS 1 AND 2)</scope>
    <source>
        <strain>SRB</strain>
        <tissue>Liver</tissue>
    </source>
</reference>
<reference key="3">
    <citation type="journal article" date="1995" name="Biochem. Biophys. Res. Commun.">
        <title>An alternately spliced mRNA encoding functional domains of murine MAdCAM-1.</title>
        <authorList>
            <person name="Schiffer S.G."/>
            <person name="Day E."/>
            <person name="Latanision S.M."/>
            <person name="Tizard R."/>
            <person name="Osborn L."/>
        </authorList>
    </citation>
    <scope>NUCLEOTIDE SEQUENCE [MRNA] (ISOFORMS 1 AND 2)</scope>
    <scope>ALTERNATIVE SPLICING</scope>
    <scope>FUNCTION</scope>
    <source>
        <strain>BALB/cJ</strain>
        <tissue>Lymph node</tissue>
    </source>
</reference>
<reference key="4">
    <citation type="journal article" date="1997" name="Cell. Immunol.">
        <title>Analysis of expression of lymphocyte homing-related adhesion molecules in ALY mice deficient in lymph nodes and Peyer's patches.</title>
        <authorList>
            <person name="Koike R."/>
            <person name="Watanabe T."/>
            <person name="Satoh H."/>
            <person name="Hee C.S."/>
            <person name="Kitada K."/>
            <person name="Kuramoto T."/>
            <person name="Serikawa T."/>
            <person name="Miyawaki S."/>
            <person name="Miyasaka M."/>
        </authorList>
    </citation>
    <scope>NUCLEOTIDE SEQUENCE [GENOMIC DNA] (ISOFORM 1)</scope>
    <scope>DISEASE</scope>
    <source>
        <strain>BALB/cJ</strain>
    </source>
</reference>
<reference key="5">
    <citation type="journal article" date="2004" name="Genome Res.">
        <title>The status, quality, and expansion of the NIH full-length cDNA project: the Mammalian Gene Collection (MGC).</title>
        <authorList>
            <consortium name="The MGC Project Team"/>
        </authorList>
    </citation>
    <scope>NUCLEOTIDE SEQUENCE [LARGE SCALE MRNA] (ISOFORM 2)</scope>
    <source>
        <tissue>Colon</tissue>
    </source>
</reference>
<reference key="6">
    <citation type="journal article" date="1993" name="Cell">
        <title>Alpha 4 beta 7 integrin mediates lymphocyte binding to the mucosal vascular addressin MAdCAM-1.</title>
        <authorList>
            <person name="Berlin C."/>
            <person name="Berg E.L."/>
            <person name="Briskin M.J."/>
            <person name="Andrew D.P."/>
            <person name="Kilshaw P.J."/>
            <person name="Holzmann B."/>
            <person name="Weissman I.L."/>
            <person name="Hamann A."/>
            <person name="Butcher E.C."/>
        </authorList>
    </citation>
    <scope>INTERACTION WITH ALPHA-4/BETA-7 INTEGRIN</scope>
    <source>
        <tissue>Lymph node</tissue>
    </source>
</reference>
<reference key="7">
    <citation type="journal article" date="1988" name="Nature">
        <title>A tissue-specific endothelial cell molecule involved in lymphocyte homing.</title>
        <authorList>
            <person name="Streeter P.R."/>
            <person name="Berg E.L."/>
            <person name="Rouse B.T.N."/>
            <person name="Bargatze R.F."/>
            <person name="Butcher E.C."/>
        </authorList>
    </citation>
    <scope>TISSUE SPECIFICITY</scope>
    <scope>FUNCTION</scope>
</reference>
<reference key="8">
    <citation type="journal article" date="1993" name="J. Clin. Invest.">
        <title>Vascular addressins are induced on islet vessels during insulitis in nonobese diabetic mice and are involved in lymphoid cell binding to islet endothelium.</title>
        <authorList>
            <person name="Hanninen A."/>
            <person name="Taylor C."/>
            <person name="Streeter P.R."/>
            <person name="Stark L.S."/>
            <person name="Sarte J.M."/>
            <person name="Shizuru J.A."/>
            <person name="Simell O."/>
            <person name="Michie S.A."/>
        </authorList>
    </citation>
    <scope>TISSUE SPECIFICITY</scope>
    <scope>INDUCTION</scope>
    <source>
        <strain>NOD</strain>
    </source>
</reference>
<reference key="9">
    <citation type="journal article" date="1993" name="Nature">
        <title>L-selectin-mediated lymphocyte rolling on MAdCAM-1.</title>
        <authorList>
            <person name="Berg E.L."/>
            <person name="McEvoy L.M."/>
            <person name="Berlin C."/>
            <person name="Bargatze R.F."/>
            <person name="Butcher E.C."/>
        </authorList>
    </citation>
    <scope>INTERACTION WITH L-SELECTIN</scope>
    <scope>GLYCOSYLATION</scope>
</reference>
<reference key="10">
    <citation type="journal article" date="1995" name="Proc. Natl. Acad. Sci. U.S.A.">
        <title>Induction of the gene encoding mucosal vascular addressin cell adhesion molecule 1 by tumor necrosis factor alpha is mediated by NF-kappa B proteins.</title>
        <authorList>
            <person name="Takeuchi M."/>
            <person name="Baichwal V.R."/>
        </authorList>
    </citation>
    <scope>INDUCTION BY TNF-ALPHA</scope>
</reference>
<accession>Q61826</accession>
<accession>O35530</accession>
<accession>Q61278</accession>
<accession>Q64275</accession>
<accession>Q8R1M6</accession>
<comment type="function">
    <text evidence="4 5">Cell adhesion leukocyte receptor expressed by mucosal venules, helps to direct lymphocyte traffic into mucosal tissues including the Peyer patches and the intestinal lamina propria. It can bind both the integrin alpha-4/beta-7 and L-selectin, regulating both the passage and retention of leukocytes. Both isoform 1 and isoform 2 can adhere to integrin alpha-4/beta-7. Isoform 2, lacking the mucin-like domain, may be specialized in supporting integrin alpha-4/beta-7-dependent adhesion strengthening, independent of L-selectin binding.</text>
</comment>
<comment type="subunit">
    <text evidence="13">Homodimer.</text>
</comment>
<comment type="subcellular location">
    <subcellularLocation>
        <location>Membrane</location>
        <topology>Single-pass type I membrane protein</topology>
    </subcellularLocation>
</comment>
<comment type="alternative products">
    <event type="alternative splicing"/>
    <isoform>
        <id>Q61826-1</id>
        <name>1</name>
        <name>Long</name>
        <name>MadCAM-384</name>
        <sequence type="displayed"/>
    </isoform>
    <isoform>
        <id>Q61826-2</id>
        <name>2</name>
        <name>Short</name>
        <name>MadCAM-240</name>
        <sequence type="described" ref="VSP_050423"/>
    </isoform>
</comment>
<comment type="tissue specificity">
    <text evidence="4 7 9">Highly expressed on high endothelial venules (HEV) of organized intestinal lymphoid tissues like the Peyer patches and mesenteric lymph nodes, and in the lamina propria of the intestine. Some expression found in the spleen, and low levels of expression in the peripheral lymph nodes and the lactating mammary gland. No expression was detected in the liver, kidneys, lungs or in normal brain. Expressed as well in brain endothelioma cells, and mucosal tissues which are in a chronic state of inflammation, such as inflamed pancreas.</text>
</comment>
<comment type="induction">
    <text evidence="7 8">By TNF-alpha, and chronic inflammation.</text>
</comment>
<comment type="PTM">
    <text evidence="6">O-glycosylated; contains syalic acid. The Ser/Thr-rich mucin-like domain may provide possible sites for O-glycosylation.</text>
</comment>
<comment type="disease">
    <text evidence="10">Absence of Madcam1 in the spleen has been found in aly/aly mice, but normal expression is found in intestinal venules. This aberrant expression is a secondary defect and not the direct cause of aly alymphoplasia, an autosomal recessive mutation which induces total aplasia of lymph nodes and Peyer patches.</text>
</comment>
<proteinExistence type="evidence at protein level"/>
<organism>
    <name type="scientific">Mus musculus</name>
    <name type="common">Mouse</name>
    <dbReference type="NCBI Taxonomy" id="10090"/>
    <lineage>
        <taxon>Eukaryota</taxon>
        <taxon>Metazoa</taxon>
        <taxon>Chordata</taxon>
        <taxon>Craniata</taxon>
        <taxon>Vertebrata</taxon>
        <taxon>Euteleostomi</taxon>
        <taxon>Mammalia</taxon>
        <taxon>Eutheria</taxon>
        <taxon>Euarchontoglires</taxon>
        <taxon>Glires</taxon>
        <taxon>Rodentia</taxon>
        <taxon>Myomorpha</taxon>
        <taxon>Muroidea</taxon>
        <taxon>Muridae</taxon>
        <taxon>Murinae</taxon>
        <taxon>Mus</taxon>
        <taxon>Mus</taxon>
    </lineage>
</organism>
<protein>
    <recommendedName>
        <fullName>Mucosal addressin cell adhesion molecule 1</fullName>
        <shortName>MAdCAM-1</shortName>
        <shortName>mMAdCAM-1</shortName>
    </recommendedName>
</protein>
<feature type="signal peptide" evidence="2">
    <location>
        <begin position="1"/>
        <end position="21"/>
    </location>
</feature>
<feature type="chain" id="PRO_0000014854" description="Mucosal addressin cell adhesion molecule 1">
    <location>
        <begin position="22"/>
        <end position="405"/>
    </location>
</feature>
<feature type="topological domain" description="Extracellular" evidence="2">
    <location>
        <begin position="22"/>
        <end position="364"/>
    </location>
</feature>
<feature type="transmembrane region" description="Helical" evidence="2">
    <location>
        <begin position="365"/>
        <end position="385"/>
    </location>
</feature>
<feature type="topological domain" description="Cytoplasmic" evidence="2">
    <location>
        <begin position="386"/>
        <end position="405"/>
    </location>
</feature>
<feature type="domain" description="Ig-like 1">
    <location>
        <begin position="22"/>
        <end position="109"/>
    </location>
</feature>
<feature type="domain" description="Ig-like 2">
    <location>
        <begin position="110"/>
        <end position="227"/>
    </location>
</feature>
<feature type="domain" description="Ig-like 3">
    <location>
        <begin position="258"/>
        <end position="357"/>
    </location>
</feature>
<feature type="region of interest" description="Mucin-like">
    <location>
        <begin position="221"/>
        <end position="257"/>
    </location>
</feature>
<feature type="region of interest" description="Disordered" evidence="3">
    <location>
        <begin position="255"/>
        <end position="275"/>
    </location>
</feature>
<feature type="glycosylation site" description="N-linked (GlcNAc...) asparagine" evidence="2">
    <location>
        <position position="230"/>
    </location>
</feature>
<feature type="glycosylation site" description="N-linked (GlcNAc...) asparagine" evidence="2">
    <location>
        <position position="253"/>
    </location>
</feature>
<feature type="glycosylation site" description="N-linked (GlcNAc...) asparagine" evidence="2">
    <location>
        <position position="361"/>
    </location>
</feature>
<feature type="disulfide bond" evidence="1">
    <location>
        <begin position="45"/>
        <end position="91"/>
    </location>
</feature>
<feature type="disulfide bond" evidence="1">
    <location>
        <begin position="49"/>
        <end position="95"/>
    </location>
</feature>
<feature type="disulfide bond" evidence="1">
    <location>
        <begin position="132"/>
        <end position="200"/>
    </location>
</feature>
<feature type="disulfide bond" evidence="2">
    <location>
        <begin position="293"/>
        <end position="341"/>
    </location>
</feature>
<feature type="splice variant" id="VSP_050423" description="In isoform 2." evidence="11 12">
    <original>VLQSQTSPKPPNTTSAEPYILTSSSTAEAVSTGLNITTLPSAPPYPKLSPRTLSSEGPCRPKIHQDLEAGWELLCEASCGPGVTVRWTLAPGDLATYHKREAGAQAWLSVLPPGPMVEGWFQCRQDPGGEVTNLYVPGQVTPNSS</original>
    <variation>A</variation>
    <location>
        <begin position="219"/>
        <end position="363"/>
    </location>
</feature>
<feature type="sequence conflict" description="In Ref. 4; BAA23364." evidence="13" ref="4">
    <original>A</original>
    <variation>S</variation>
    <location>
        <position position="6"/>
    </location>
</feature>
<feature type="sequence conflict" description="In Ref. 4." evidence="13" ref="4">
    <original>A</original>
    <variation>S</variation>
    <location>
        <position position="10"/>
    </location>
</feature>
<feature type="sequence conflict" description="In Ref. 4." evidence="13" ref="4">
    <original>A</original>
    <variation>S</variation>
    <location>
        <position position="12"/>
    </location>
</feature>
<feature type="sequence conflict" description="In Ref. 1 and 4." evidence="13" ref="1 4">
    <original>L</original>
    <variation>R</variation>
    <location>
        <position position="61"/>
    </location>
</feature>
<name>MADCA_MOUSE</name>
<dbReference type="EMBL" id="L21203">
    <property type="protein sequence ID" value="AAA39485.1"/>
    <property type="molecule type" value="mRNA"/>
</dbReference>
<dbReference type="EMBL" id="U14729">
    <property type="protein sequence ID" value="AAA81639.1"/>
    <property type="molecule type" value="Genomic_DNA"/>
</dbReference>
<dbReference type="EMBL" id="U14552">
    <property type="protein sequence ID" value="AAA81639.1"/>
    <property type="status" value="JOINED"/>
    <property type="molecule type" value="Genomic_DNA"/>
</dbReference>
<dbReference type="EMBL" id="U14729">
    <property type="protein sequence ID" value="AAA81638.1"/>
    <property type="molecule type" value="Genomic_DNA"/>
</dbReference>
<dbReference type="EMBL" id="U14552">
    <property type="protein sequence ID" value="AAA81638.1"/>
    <property type="status" value="JOINED"/>
    <property type="molecule type" value="Genomic_DNA"/>
</dbReference>
<dbReference type="EMBL" id="S80258">
    <property type="protein sequence ID" value="AAB35609.1"/>
    <property type="molecule type" value="mRNA"/>
</dbReference>
<dbReference type="EMBL" id="D50434">
    <property type="protein sequence ID" value="BAA23364.1"/>
    <property type="molecule type" value="Genomic_DNA"/>
</dbReference>
<dbReference type="EMBL" id="BC024372">
    <property type="protein sequence ID" value="AAH24372.1"/>
    <property type="molecule type" value="mRNA"/>
</dbReference>
<dbReference type="CCDS" id="CCDS23981.1">
    <molecule id="Q61826-1"/>
</dbReference>
<dbReference type="CCDS" id="CCDS88048.1">
    <molecule id="Q61826-2"/>
</dbReference>
<dbReference type="PIR" id="I48645">
    <property type="entry name" value="I48645"/>
</dbReference>
<dbReference type="PIR" id="S33601">
    <property type="entry name" value="S33601"/>
</dbReference>
<dbReference type="RefSeq" id="NP_001345714.1">
    <molecule id="Q61826-2"/>
    <property type="nucleotide sequence ID" value="NM_001358785.1"/>
</dbReference>
<dbReference type="RefSeq" id="XP_006513356.1">
    <property type="nucleotide sequence ID" value="XM_006513293.3"/>
</dbReference>
<dbReference type="SMR" id="Q61826"/>
<dbReference type="FunCoup" id="Q61826">
    <property type="interactions" value="184"/>
</dbReference>
<dbReference type="STRING" id="10090.ENSMUSP00000020554"/>
<dbReference type="BindingDB" id="Q61826"/>
<dbReference type="GlyCosmos" id="Q61826">
    <property type="glycosylation" value="3 sites, No reported glycans"/>
</dbReference>
<dbReference type="GlyGen" id="Q61826">
    <property type="glycosylation" value="4 sites"/>
</dbReference>
<dbReference type="PhosphoSitePlus" id="Q61826"/>
<dbReference type="PaxDb" id="10090-ENSMUSP00000020554"/>
<dbReference type="ProteomicsDB" id="292145">
    <molecule id="Q61826-1"/>
</dbReference>
<dbReference type="ProteomicsDB" id="292146">
    <molecule id="Q61826-2"/>
</dbReference>
<dbReference type="Antibodypedia" id="9993">
    <property type="antibodies" value="786 antibodies from 36 providers"/>
</dbReference>
<dbReference type="Ensembl" id="ENSMUST00000217748.2">
    <molecule id="Q61826-2"/>
    <property type="protein sequence ID" value="ENSMUSP00000151928.2"/>
    <property type="gene ID" value="ENSMUSG00000020310.10"/>
</dbReference>
<dbReference type="AGR" id="MGI:103579"/>
<dbReference type="MGI" id="MGI:103579">
    <property type="gene designation" value="Madcam1"/>
</dbReference>
<dbReference type="VEuPathDB" id="HostDB:ENSMUSG00000020310"/>
<dbReference type="eggNOG" id="ENOG502SR0W">
    <property type="taxonomic scope" value="Eukaryota"/>
</dbReference>
<dbReference type="GeneTree" id="ENSGT00510000049549"/>
<dbReference type="InParanoid" id="Q61826"/>
<dbReference type="PhylomeDB" id="Q61826"/>
<dbReference type="Reactome" id="R-MMU-198933">
    <property type="pathway name" value="Immunoregulatory interactions between a Lymphoid and a non-Lymphoid cell"/>
</dbReference>
<dbReference type="Reactome" id="R-MMU-216083">
    <property type="pathway name" value="Integrin cell surface interactions"/>
</dbReference>
<dbReference type="BioGRID-ORCS" id="17123">
    <property type="hits" value="6 hits in 78 CRISPR screens"/>
</dbReference>
<dbReference type="PRO" id="PR:Q61826"/>
<dbReference type="Proteomes" id="UP000000589">
    <property type="component" value="Chromosome 10"/>
</dbReference>
<dbReference type="RNAct" id="Q61826">
    <property type="molecule type" value="protein"/>
</dbReference>
<dbReference type="Bgee" id="ENSMUSG00000020310">
    <property type="expression patterns" value="Expressed in mesenteric lymph node and 70 other cell types or tissues"/>
</dbReference>
<dbReference type="ExpressionAtlas" id="Q61826">
    <property type="expression patterns" value="baseline and differential"/>
</dbReference>
<dbReference type="GO" id="GO:0016020">
    <property type="term" value="C:membrane"/>
    <property type="evidence" value="ECO:0007669"/>
    <property type="project" value="UniProtKB-SubCell"/>
</dbReference>
<dbReference type="GO" id="GO:0098640">
    <property type="term" value="F:integrin binding involved in cell-matrix adhesion"/>
    <property type="evidence" value="ECO:0007669"/>
    <property type="project" value="InterPro"/>
</dbReference>
<dbReference type="GO" id="GO:0007229">
    <property type="term" value="P:integrin-mediated signaling pathway"/>
    <property type="evidence" value="ECO:0007669"/>
    <property type="project" value="InterPro"/>
</dbReference>
<dbReference type="GO" id="GO:0030216">
    <property type="term" value="P:keratinocyte differentiation"/>
    <property type="evidence" value="ECO:0000315"/>
    <property type="project" value="MGI"/>
</dbReference>
<dbReference type="GO" id="GO:0050900">
    <property type="term" value="P:leukocyte migration"/>
    <property type="evidence" value="ECO:0000315"/>
    <property type="project" value="MGI"/>
</dbReference>
<dbReference type="GO" id="GO:2000403">
    <property type="term" value="P:positive regulation of lymphocyte migration"/>
    <property type="evidence" value="ECO:0007669"/>
    <property type="project" value="InterPro"/>
</dbReference>
<dbReference type="FunFam" id="2.60.40.10:FF:000194">
    <property type="entry name" value="Intercellular adhesion molecule 1"/>
    <property type="match status" value="1"/>
</dbReference>
<dbReference type="FunFam" id="2.60.40.10:FF:000933">
    <property type="entry name" value="Mucosal addressin cell adhesion molecule 1"/>
    <property type="match status" value="1"/>
</dbReference>
<dbReference type="Gene3D" id="2.60.40.10">
    <property type="entry name" value="Immunoglobulins"/>
    <property type="match status" value="2"/>
</dbReference>
<dbReference type="InterPro" id="IPR015169">
    <property type="entry name" value="Adhes-Ig-like"/>
</dbReference>
<dbReference type="InterPro" id="IPR036179">
    <property type="entry name" value="Ig-like_dom_sf"/>
</dbReference>
<dbReference type="InterPro" id="IPR013783">
    <property type="entry name" value="Ig-like_fold"/>
</dbReference>
<dbReference type="InterPro" id="IPR037413">
    <property type="entry name" value="MADCAM1"/>
</dbReference>
<dbReference type="PANTHER" id="PTHR14162:SF1">
    <property type="entry name" value="MUCOSAL ADDRESSIN CELL ADHESION MOLECULE 1"/>
    <property type="match status" value="1"/>
</dbReference>
<dbReference type="PANTHER" id="PTHR14162">
    <property type="entry name" value="MUCOSAL ADDRESSIN CELL ADHESION MOLECULE-1"/>
    <property type="match status" value="1"/>
</dbReference>
<dbReference type="Pfam" id="PF09085">
    <property type="entry name" value="Adhes-Ig_like"/>
    <property type="match status" value="1"/>
</dbReference>
<dbReference type="SUPFAM" id="SSF48726">
    <property type="entry name" value="Immunoglobulin"/>
    <property type="match status" value="2"/>
</dbReference>
<gene>
    <name type="primary">Madcam1</name>
</gene>